<organism>
    <name type="scientific">Aeromonas hydrophila subsp. hydrophila (strain ATCC 7966 / DSM 30187 / BCRC 13018 / CCUG 14551 / JCM 1027 / KCTC 2358 / NCIMB 9240 / NCTC 8049)</name>
    <dbReference type="NCBI Taxonomy" id="380703"/>
    <lineage>
        <taxon>Bacteria</taxon>
        <taxon>Pseudomonadati</taxon>
        <taxon>Pseudomonadota</taxon>
        <taxon>Gammaproteobacteria</taxon>
        <taxon>Aeromonadales</taxon>
        <taxon>Aeromonadaceae</taxon>
        <taxon>Aeromonas</taxon>
    </lineage>
</organism>
<evidence type="ECO:0000255" key="1">
    <source>
        <dbReference type="HAMAP-Rule" id="MF_00151"/>
    </source>
</evidence>
<accession>A0KEN4</accession>
<comment type="function">
    <text evidence="1">Reversibly transfers an adenylyl group from ATP to 4'-phosphopantetheine, yielding dephospho-CoA (dPCoA) and pyrophosphate.</text>
</comment>
<comment type="catalytic activity">
    <reaction evidence="1">
        <text>(R)-4'-phosphopantetheine + ATP + H(+) = 3'-dephospho-CoA + diphosphate</text>
        <dbReference type="Rhea" id="RHEA:19801"/>
        <dbReference type="ChEBI" id="CHEBI:15378"/>
        <dbReference type="ChEBI" id="CHEBI:30616"/>
        <dbReference type="ChEBI" id="CHEBI:33019"/>
        <dbReference type="ChEBI" id="CHEBI:57328"/>
        <dbReference type="ChEBI" id="CHEBI:61723"/>
        <dbReference type="EC" id="2.7.7.3"/>
    </reaction>
</comment>
<comment type="cofactor">
    <cofactor evidence="1">
        <name>Mg(2+)</name>
        <dbReference type="ChEBI" id="CHEBI:18420"/>
    </cofactor>
</comment>
<comment type="pathway">
    <text evidence="1">Cofactor biosynthesis; coenzyme A biosynthesis; CoA from (R)-pantothenate: step 4/5.</text>
</comment>
<comment type="subunit">
    <text evidence="1">Homohexamer.</text>
</comment>
<comment type="subcellular location">
    <subcellularLocation>
        <location evidence="1">Cytoplasm</location>
    </subcellularLocation>
</comment>
<comment type="similarity">
    <text evidence="1">Belongs to the bacterial CoaD family.</text>
</comment>
<dbReference type="EC" id="2.7.7.3" evidence="1"/>
<dbReference type="EMBL" id="CP000462">
    <property type="protein sequence ID" value="ABK39025.1"/>
    <property type="molecule type" value="Genomic_DNA"/>
</dbReference>
<dbReference type="RefSeq" id="WP_011704185.1">
    <property type="nucleotide sequence ID" value="NC_008570.1"/>
</dbReference>
<dbReference type="RefSeq" id="YP_854699.1">
    <property type="nucleotide sequence ID" value="NC_008570.1"/>
</dbReference>
<dbReference type="SMR" id="A0KEN4"/>
<dbReference type="STRING" id="380703.AHA_0166"/>
<dbReference type="EnsemblBacteria" id="ABK39025">
    <property type="protein sequence ID" value="ABK39025"/>
    <property type="gene ID" value="AHA_0166"/>
</dbReference>
<dbReference type="GeneID" id="4487429"/>
<dbReference type="KEGG" id="aha:AHA_0166"/>
<dbReference type="PATRIC" id="fig|380703.7.peg.156"/>
<dbReference type="eggNOG" id="COG0669">
    <property type="taxonomic scope" value="Bacteria"/>
</dbReference>
<dbReference type="HOGENOM" id="CLU_100149_0_1_6"/>
<dbReference type="OrthoDB" id="9806661at2"/>
<dbReference type="UniPathway" id="UPA00241">
    <property type="reaction ID" value="UER00355"/>
</dbReference>
<dbReference type="Proteomes" id="UP000000756">
    <property type="component" value="Chromosome"/>
</dbReference>
<dbReference type="GO" id="GO:0005737">
    <property type="term" value="C:cytoplasm"/>
    <property type="evidence" value="ECO:0007669"/>
    <property type="project" value="UniProtKB-SubCell"/>
</dbReference>
<dbReference type="GO" id="GO:0005524">
    <property type="term" value="F:ATP binding"/>
    <property type="evidence" value="ECO:0007669"/>
    <property type="project" value="UniProtKB-KW"/>
</dbReference>
<dbReference type="GO" id="GO:0004595">
    <property type="term" value="F:pantetheine-phosphate adenylyltransferase activity"/>
    <property type="evidence" value="ECO:0007669"/>
    <property type="project" value="UniProtKB-UniRule"/>
</dbReference>
<dbReference type="GO" id="GO:0015937">
    <property type="term" value="P:coenzyme A biosynthetic process"/>
    <property type="evidence" value="ECO:0007669"/>
    <property type="project" value="UniProtKB-UniRule"/>
</dbReference>
<dbReference type="CDD" id="cd02163">
    <property type="entry name" value="PPAT"/>
    <property type="match status" value="1"/>
</dbReference>
<dbReference type="FunFam" id="3.40.50.620:FF:000012">
    <property type="entry name" value="Phosphopantetheine adenylyltransferase"/>
    <property type="match status" value="1"/>
</dbReference>
<dbReference type="Gene3D" id="3.40.50.620">
    <property type="entry name" value="HUPs"/>
    <property type="match status" value="1"/>
</dbReference>
<dbReference type="HAMAP" id="MF_00151">
    <property type="entry name" value="PPAT_bact"/>
    <property type="match status" value="1"/>
</dbReference>
<dbReference type="InterPro" id="IPR004821">
    <property type="entry name" value="Cyt_trans-like"/>
</dbReference>
<dbReference type="InterPro" id="IPR001980">
    <property type="entry name" value="PPAT"/>
</dbReference>
<dbReference type="InterPro" id="IPR014729">
    <property type="entry name" value="Rossmann-like_a/b/a_fold"/>
</dbReference>
<dbReference type="NCBIfam" id="TIGR01510">
    <property type="entry name" value="coaD_prev_kdtB"/>
    <property type="match status" value="1"/>
</dbReference>
<dbReference type="NCBIfam" id="TIGR00125">
    <property type="entry name" value="cyt_tran_rel"/>
    <property type="match status" value="1"/>
</dbReference>
<dbReference type="PANTHER" id="PTHR21342">
    <property type="entry name" value="PHOSPHOPANTETHEINE ADENYLYLTRANSFERASE"/>
    <property type="match status" value="1"/>
</dbReference>
<dbReference type="PANTHER" id="PTHR21342:SF1">
    <property type="entry name" value="PHOSPHOPANTETHEINE ADENYLYLTRANSFERASE"/>
    <property type="match status" value="1"/>
</dbReference>
<dbReference type="Pfam" id="PF01467">
    <property type="entry name" value="CTP_transf_like"/>
    <property type="match status" value="1"/>
</dbReference>
<dbReference type="PRINTS" id="PR01020">
    <property type="entry name" value="LPSBIOSNTHSS"/>
</dbReference>
<dbReference type="SUPFAM" id="SSF52374">
    <property type="entry name" value="Nucleotidylyl transferase"/>
    <property type="match status" value="1"/>
</dbReference>
<reference key="1">
    <citation type="journal article" date="2006" name="J. Bacteriol.">
        <title>Genome sequence of Aeromonas hydrophila ATCC 7966T: jack of all trades.</title>
        <authorList>
            <person name="Seshadri R."/>
            <person name="Joseph S.W."/>
            <person name="Chopra A.K."/>
            <person name="Sha J."/>
            <person name="Shaw J."/>
            <person name="Graf J."/>
            <person name="Haft D.H."/>
            <person name="Wu M."/>
            <person name="Ren Q."/>
            <person name="Rosovitz M.J."/>
            <person name="Madupu R."/>
            <person name="Tallon L."/>
            <person name="Kim M."/>
            <person name="Jin S."/>
            <person name="Vuong H."/>
            <person name="Stine O.C."/>
            <person name="Ali A."/>
            <person name="Horneman A.J."/>
            <person name="Heidelberg J.F."/>
        </authorList>
    </citation>
    <scope>NUCLEOTIDE SEQUENCE [LARGE SCALE GENOMIC DNA]</scope>
    <source>
        <strain>ATCC 7966 / DSM 30187 / BCRC 13018 / CCUG 14551 / JCM 1027 / KCTC 2358 / NCIMB 9240 / NCTC 8049</strain>
    </source>
</reference>
<protein>
    <recommendedName>
        <fullName evidence="1">Phosphopantetheine adenylyltransferase</fullName>
        <ecNumber evidence="1">2.7.7.3</ecNumber>
    </recommendedName>
    <alternativeName>
        <fullName evidence="1">Dephospho-CoA pyrophosphorylase</fullName>
    </alternativeName>
    <alternativeName>
        <fullName evidence="1">Pantetheine-phosphate adenylyltransferase</fullName>
        <shortName evidence="1">PPAT</shortName>
    </alternativeName>
</protein>
<proteinExistence type="inferred from homology"/>
<sequence length="160" mass="17651">MTNKVIYPGTFDPVTNGHTDLIGRAAKLFDEVVVGVANSPSKRPLFDLDERVQLARQVTAHLPNVKVVGFSGLLVDFAREQQANVLIRGLRAVSDFEYEFQLANMNRRLMPELESVFLTPAEENSFISSTLVKEVALHGGDIRQFVDPAVAAAIKAKQTK</sequence>
<feature type="chain" id="PRO_1000011086" description="Phosphopantetheine adenylyltransferase">
    <location>
        <begin position="1"/>
        <end position="160"/>
    </location>
</feature>
<feature type="binding site" evidence="1">
    <location>
        <begin position="10"/>
        <end position="11"/>
    </location>
    <ligand>
        <name>ATP</name>
        <dbReference type="ChEBI" id="CHEBI:30616"/>
    </ligand>
</feature>
<feature type="binding site" evidence="1">
    <location>
        <position position="10"/>
    </location>
    <ligand>
        <name>substrate</name>
    </ligand>
</feature>
<feature type="binding site" evidence="1">
    <location>
        <position position="18"/>
    </location>
    <ligand>
        <name>ATP</name>
        <dbReference type="ChEBI" id="CHEBI:30616"/>
    </ligand>
</feature>
<feature type="binding site" evidence="1">
    <location>
        <position position="42"/>
    </location>
    <ligand>
        <name>substrate</name>
    </ligand>
</feature>
<feature type="binding site" evidence="1">
    <location>
        <position position="74"/>
    </location>
    <ligand>
        <name>substrate</name>
    </ligand>
</feature>
<feature type="binding site" evidence="1">
    <location>
        <position position="88"/>
    </location>
    <ligand>
        <name>substrate</name>
    </ligand>
</feature>
<feature type="binding site" evidence="1">
    <location>
        <begin position="89"/>
        <end position="91"/>
    </location>
    <ligand>
        <name>ATP</name>
        <dbReference type="ChEBI" id="CHEBI:30616"/>
    </ligand>
</feature>
<feature type="binding site" evidence="1">
    <location>
        <position position="99"/>
    </location>
    <ligand>
        <name>ATP</name>
        <dbReference type="ChEBI" id="CHEBI:30616"/>
    </ligand>
</feature>
<feature type="binding site" evidence="1">
    <location>
        <begin position="124"/>
        <end position="130"/>
    </location>
    <ligand>
        <name>ATP</name>
        <dbReference type="ChEBI" id="CHEBI:30616"/>
    </ligand>
</feature>
<feature type="site" description="Transition state stabilizer" evidence="1">
    <location>
        <position position="18"/>
    </location>
</feature>
<name>COAD_AERHH</name>
<keyword id="KW-0067">ATP-binding</keyword>
<keyword id="KW-0173">Coenzyme A biosynthesis</keyword>
<keyword id="KW-0963">Cytoplasm</keyword>
<keyword id="KW-0460">Magnesium</keyword>
<keyword id="KW-0547">Nucleotide-binding</keyword>
<keyword id="KW-0548">Nucleotidyltransferase</keyword>
<keyword id="KW-1185">Reference proteome</keyword>
<keyword id="KW-0808">Transferase</keyword>
<gene>
    <name evidence="1" type="primary">coaD</name>
    <name type="ordered locus">AHA_0166</name>
</gene>